<protein>
    <recommendedName>
        <fullName evidence="1">Inosine/xanthosine triphosphatase</fullName>
        <shortName evidence="1">ITPase/XTPase</shortName>
        <ecNumber evidence="1">3.6.1.73</ecNumber>
    </recommendedName>
    <alternativeName>
        <fullName evidence="1">Non-canonical purine NTP phosphatase</fullName>
    </alternativeName>
    <alternativeName>
        <fullName evidence="1">Non-standard purine NTP phosphatase</fullName>
    </alternativeName>
    <alternativeName>
        <fullName evidence="1">Nucleoside-triphosphate phosphatase</fullName>
        <shortName evidence="1">NTPase</shortName>
    </alternativeName>
</protein>
<keyword id="KW-0378">Hydrolase</keyword>
<keyword id="KW-0460">Magnesium</keyword>
<keyword id="KW-0464">Manganese</keyword>
<keyword id="KW-0479">Metal-binding</keyword>
<keyword id="KW-0546">Nucleotide metabolism</keyword>
<keyword id="KW-0547">Nucleotide-binding</keyword>
<proteinExistence type="inferred from homology"/>
<feature type="chain" id="PRO_1000130943" description="Inosine/xanthosine triphosphatase">
    <location>
        <begin position="1"/>
        <end position="171"/>
    </location>
</feature>
<feature type="binding site" evidence="1">
    <location>
        <begin position="8"/>
        <end position="13"/>
    </location>
    <ligand>
        <name>substrate</name>
    </ligand>
</feature>
<feature type="binding site" evidence="1">
    <location>
        <position position="38"/>
    </location>
    <ligand>
        <name>Mg(2+)</name>
        <dbReference type="ChEBI" id="CHEBI:18420"/>
    </ligand>
</feature>
<feature type="binding site" evidence="1">
    <location>
        <position position="68"/>
    </location>
    <ligand>
        <name>Mg(2+)</name>
        <dbReference type="ChEBI" id="CHEBI:18420"/>
    </ligand>
</feature>
<name>NCPP_SALDC</name>
<reference key="1">
    <citation type="journal article" date="2011" name="J. Bacteriol.">
        <title>Comparative genomics of 28 Salmonella enterica isolates: evidence for CRISPR-mediated adaptive sublineage evolution.</title>
        <authorList>
            <person name="Fricke W.F."/>
            <person name="Mammel M.K."/>
            <person name="McDermott P.F."/>
            <person name="Tartera C."/>
            <person name="White D.G."/>
            <person name="Leclerc J.E."/>
            <person name="Ravel J."/>
            <person name="Cebula T.A."/>
        </authorList>
    </citation>
    <scope>NUCLEOTIDE SEQUENCE [LARGE SCALE GENOMIC DNA]</scope>
    <source>
        <strain>CT_02021853</strain>
    </source>
</reference>
<organism>
    <name type="scientific">Salmonella dublin (strain CT_02021853)</name>
    <dbReference type="NCBI Taxonomy" id="439851"/>
    <lineage>
        <taxon>Bacteria</taxon>
        <taxon>Pseudomonadati</taxon>
        <taxon>Pseudomonadota</taxon>
        <taxon>Gammaproteobacteria</taxon>
        <taxon>Enterobacterales</taxon>
        <taxon>Enterobacteriaceae</taxon>
        <taxon>Salmonella</taxon>
    </lineage>
</organism>
<evidence type="ECO:0000255" key="1">
    <source>
        <dbReference type="HAMAP-Rule" id="MF_00648"/>
    </source>
</evidence>
<dbReference type="EC" id="3.6.1.73" evidence="1"/>
<dbReference type="EMBL" id="CP001144">
    <property type="protein sequence ID" value="ACH73745.1"/>
    <property type="molecule type" value="Genomic_DNA"/>
</dbReference>
<dbReference type="RefSeq" id="WP_000554310.1">
    <property type="nucleotide sequence ID" value="NC_011205.1"/>
</dbReference>
<dbReference type="SMR" id="B5FTD8"/>
<dbReference type="KEGG" id="sed:SeD_A4996"/>
<dbReference type="HOGENOM" id="CLU_087417_1_0_6"/>
<dbReference type="Proteomes" id="UP000008322">
    <property type="component" value="Chromosome"/>
</dbReference>
<dbReference type="GO" id="GO:0103023">
    <property type="term" value="F:ITPase activity"/>
    <property type="evidence" value="ECO:0007669"/>
    <property type="project" value="UniProtKB-EC"/>
</dbReference>
<dbReference type="GO" id="GO:0046872">
    <property type="term" value="F:metal ion binding"/>
    <property type="evidence" value="ECO:0007669"/>
    <property type="project" value="UniProtKB-KW"/>
</dbReference>
<dbReference type="GO" id="GO:0000166">
    <property type="term" value="F:nucleotide binding"/>
    <property type="evidence" value="ECO:0007669"/>
    <property type="project" value="UniProtKB-KW"/>
</dbReference>
<dbReference type="GO" id="GO:0017111">
    <property type="term" value="F:ribonucleoside triphosphate phosphatase activity"/>
    <property type="evidence" value="ECO:0000250"/>
    <property type="project" value="UniProtKB"/>
</dbReference>
<dbReference type="GO" id="GO:0009117">
    <property type="term" value="P:nucleotide metabolic process"/>
    <property type="evidence" value="ECO:0007669"/>
    <property type="project" value="UniProtKB-KW"/>
</dbReference>
<dbReference type="GO" id="GO:0006772">
    <property type="term" value="P:thiamine metabolic process"/>
    <property type="evidence" value="ECO:0007669"/>
    <property type="project" value="TreeGrafter"/>
</dbReference>
<dbReference type="FunFam" id="3.90.950.10:FF:000002">
    <property type="entry name" value="Inosine/xanthosine triphosphatase"/>
    <property type="match status" value="1"/>
</dbReference>
<dbReference type="Gene3D" id="3.90.950.10">
    <property type="match status" value="1"/>
</dbReference>
<dbReference type="HAMAP" id="MF_00648">
    <property type="entry name" value="Non_canon_purine_NTPase_YjjX"/>
    <property type="match status" value="1"/>
</dbReference>
<dbReference type="InterPro" id="IPR029001">
    <property type="entry name" value="ITPase-like_fam"/>
</dbReference>
<dbReference type="InterPro" id="IPR002786">
    <property type="entry name" value="Non_canon_purine_NTPase"/>
</dbReference>
<dbReference type="InterPro" id="IPR026533">
    <property type="entry name" value="NTPase/PRRC1"/>
</dbReference>
<dbReference type="InterPro" id="IPR050299">
    <property type="entry name" value="YjjX_NTPase"/>
</dbReference>
<dbReference type="NCBIfam" id="TIGR00258">
    <property type="entry name" value="inosine/xanthosine triphosphatase"/>
    <property type="match status" value="1"/>
</dbReference>
<dbReference type="NCBIfam" id="NF003459">
    <property type="entry name" value="PRK05074.1"/>
    <property type="match status" value="1"/>
</dbReference>
<dbReference type="PANTHER" id="PTHR34699">
    <property type="match status" value="1"/>
</dbReference>
<dbReference type="PANTHER" id="PTHR34699:SF2">
    <property type="entry name" value="NON-CANONICAL PURINE NTP PHOSPHATASE_PRRC1 DOMAIN-CONTAINING PROTEIN"/>
    <property type="match status" value="1"/>
</dbReference>
<dbReference type="Pfam" id="PF01931">
    <property type="entry name" value="NTPase_I-T"/>
    <property type="match status" value="1"/>
</dbReference>
<dbReference type="SUPFAM" id="SSF52972">
    <property type="entry name" value="ITPase-like"/>
    <property type="match status" value="1"/>
</dbReference>
<gene>
    <name type="primary">yjjX</name>
    <name type="ordered locus">SeD_A4996</name>
</gene>
<comment type="function">
    <text evidence="1">Phosphatase that hydrolyzes non-canonical purine nucleotides such as XTP and ITP to their respective diphosphate derivatives. Probably excludes non-canonical purines from DNA/RNA precursor pool, thus preventing their incorporation into DNA/RNA and avoiding chromosomal lesions.</text>
</comment>
<comment type="catalytic activity">
    <reaction evidence="1">
        <text>XTP + H2O = XDP + phosphate + H(+)</text>
        <dbReference type="Rhea" id="RHEA:28406"/>
        <dbReference type="ChEBI" id="CHEBI:15377"/>
        <dbReference type="ChEBI" id="CHEBI:15378"/>
        <dbReference type="ChEBI" id="CHEBI:43474"/>
        <dbReference type="ChEBI" id="CHEBI:59884"/>
        <dbReference type="ChEBI" id="CHEBI:61314"/>
        <dbReference type="EC" id="3.6.1.73"/>
    </reaction>
</comment>
<comment type="catalytic activity">
    <reaction evidence="1">
        <text>ITP + H2O = IDP + phosphate + H(+)</text>
        <dbReference type="Rhea" id="RHEA:28330"/>
        <dbReference type="ChEBI" id="CHEBI:15377"/>
        <dbReference type="ChEBI" id="CHEBI:15378"/>
        <dbReference type="ChEBI" id="CHEBI:43474"/>
        <dbReference type="ChEBI" id="CHEBI:58280"/>
        <dbReference type="ChEBI" id="CHEBI:61402"/>
        <dbReference type="EC" id="3.6.1.73"/>
    </reaction>
</comment>
<comment type="cofactor">
    <cofactor evidence="1">
        <name>Mg(2+)</name>
        <dbReference type="ChEBI" id="CHEBI:18420"/>
    </cofactor>
    <cofactor evidence="1">
        <name>Mn(2+)</name>
        <dbReference type="ChEBI" id="CHEBI:29035"/>
    </cofactor>
    <text evidence="1">Binds 1 divalent metal cation per subunit; can use either Mg(2+) or Mn(2+).</text>
</comment>
<comment type="subunit">
    <text evidence="1">Homodimer.</text>
</comment>
<comment type="similarity">
    <text evidence="1">Belongs to the YjjX NTPase family.</text>
</comment>
<sequence length="171" mass="18528">MHQVISATTNPAKIQAILQAFEEIFGEGSCHITPVAVESGVPEQPFGSEETRAGARNRVDNARRLHPQADFWVAIEAGIDDDATFSWVVIDNGVQRGEARSATLPLPAVILDRVRQGEALGPVMSHYTGIDEIGRKEGAIGVFTAGKLTRSSVYYQAVILALSPFHNAVYR</sequence>
<accession>B5FTD8</accession>